<comment type="miscellaneous">
    <text>This ribosomal protein is synthesized as a C-terminal extension protein (CEP) of a ubiquitin-like protein.</text>
</comment>
<comment type="similarity">
    <text evidence="3">Belongs to the eukaryotic ribosomal protein eS30 family.</text>
</comment>
<comment type="sequence caution" evidence="3">
    <conflict type="erroneous initiation">
        <sequence resource="EMBL-CDS" id="AAB52915"/>
    </conflict>
</comment>
<evidence type="ECO:0000250" key="1">
    <source>
        <dbReference type="UniProtKB" id="P62862"/>
    </source>
</evidence>
<evidence type="ECO:0000256" key="2">
    <source>
        <dbReference type="SAM" id="MobiDB-lite"/>
    </source>
</evidence>
<evidence type="ECO:0000305" key="3"/>
<dbReference type="EMBL" id="U72543">
    <property type="protein sequence ID" value="AAB52915.1"/>
    <property type="status" value="ALT_INIT"/>
    <property type="molecule type" value="mRNA"/>
</dbReference>
<dbReference type="SMR" id="P62863"/>
<dbReference type="FunCoup" id="P62863">
    <property type="interactions" value="147"/>
</dbReference>
<dbReference type="PeptideAtlas" id="P62863"/>
<dbReference type="HOGENOM" id="CLU_010412_5_0_1"/>
<dbReference type="InParanoid" id="P62863"/>
<dbReference type="ChiTaRS" id="FAU">
    <property type="organism name" value="pig"/>
</dbReference>
<dbReference type="Proteomes" id="UP000008227">
    <property type="component" value="Unplaced"/>
</dbReference>
<dbReference type="Proteomes" id="UP000314985">
    <property type="component" value="Unplaced"/>
</dbReference>
<dbReference type="Proteomes" id="UP000694570">
    <property type="component" value="Unplaced"/>
</dbReference>
<dbReference type="Proteomes" id="UP000694571">
    <property type="component" value="Unplaced"/>
</dbReference>
<dbReference type="Proteomes" id="UP000694720">
    <property type="component" value="Unplaced"/>
</dbReference>
<dbReference type="Proteomes" id="UP000694722">
    <property type="component" value="Unplaced"/>
</dbReference>
<dbReference type="Proteomes" id="UP000694723">
    <property type="component" value="Unplaced"/>
</dbReference>
<dbReference type="Proteomes" id="UP000694724">
    <property type="component" value="Unplaced"/>
</dbReference>
<dbReference type="Proteomes" id="UP000694725">
    <property type="component" value="Unplaced"/>
</dbReference>
<dbReference type="Proteomes" id="UP000694726">
    <property type="component" value="Unplaced"/>
</dbReference>
<dbReference type="Proteomes" id="UP000694727">
    <property type="component" value="Unplaced"/>
</dbReference>
<dbReference type="Proteomes" id="UP000694728">
    <property type="component" value="Unplaced"/>
</dbReference>
<dbReference type="GO" id="GO:0022627">
    <property type="term" value="C:cytosolic small ribosomal subunit"/>
    <property type="evidence" value="ECO:0000318"/>
    <property type="project" value="GO_Central"/>
</dbReference>
<dbReference type="GO" id="GO:0003735">
    <property type="term" value="F:structural constituent of ribosome"/>
    <property type="evidence" value="ECO:0007669"/>
    <property type="project" value="InterPro"/>
</dbReference>
<dbReference type="GO" id="GO:0006412">
    <property type="term" value="P:translation"/>
    <property type="evidence" value="ECO:0007669"/>
    <property type="project" value="InterPro"/>
</dbReference>
<dbReference type="InterPro" id="IPR006846">
    <property type="entry name" value="Ribosomal_eS30"/>
</dbReference>
<dbReference type="PANTHER" id="PTHR12650">
    <property type="entry name" value="40S RIBOSOMAL PROTEIN S30/UBIQUITIN-LIKE PROTEIN FUBI"/>
    <property type="match status" value="1"/>
</dbReference>
<dbReference type="PANTHER" id="PTHR12650:SF15">
    <property type="entry name" value="RIBOSOMAL PROTEIN S30, ISOFORM A"/>
    <property type="match status" value="1"/>
</dbReference>
<dbReference type="Pfam" id="PF04758">
    <property type="entry name" value="Ribosomal_S30"/>
    <property type="match status" value="1"/>
</dbReference>
<gene>
    <name type="primary">FAU</name>
</gene>
<reference key="1">
    <citation type="journal article" date="1997" name="FEBS Lett.">
        <title>Ubiquitin is physiologically induced by interferons in luminal epithelium of porcine uterine endometrium in early pregnancy: global RT-PCR cDNA in place of RNA for differential display screening.</title>
        <authorList>
            <person name="Chwetzoff S."/>
            <person name="d'Andrea S."/>
        </authorList>
    </citation>
    <scope>NUCLEOTIDE SEQUENCE [MRNA]</scope>
    <source>
        <tissue>Uterus</tissue>
    </source>
</reference>
<accession>P62863</accession>
<accession>Q05472</accession>
<accession>Q95261</accession>
<name>RS30_PIG</name>
<proteinExistence type="inferred from homology"/>
<protein>
    <recommendedName>
        <fullName evidence="3">Small ribosomal subunit protein eS30</fullName>
    </recommendedName>
    <alternativeName>
        <fullName>40S ribosomal protein S30</fullName>
    </alternativeName>
</protein>
<organism>
    <name type="scientific">Sus scrofa</name>
    <name type="common">Pig</name>
    <dbReference type="NCBI Taxonomy" id="9823"/>
    <lineage>
        <taxon>Eukaryota</taxon>
        <taxon>Metazoa</taxon>
        <taxon>Chordata</taxon>
        <taxon>Craniata</taxon>
        <taxon>Vertebrata</taxon>
        <taxon>Euteleostomi</taxon>
        <taxon>Mammalia</taxon>
        <taxon>Eutheria</taxon>
        <taxon>Laurasiatheria</taxon>
        <taxon>Artiodactyla</taxon>
        <taxon>Suina</taxon>
        <taxon>Suidae</taxon>
        <taxon>Sus</taxon>
    </lineage>
</organism>
<keyword id="KW-1185">Reference proteome</keyword>
<keyword id="KW-0687">Ribonucleoprotein</keyword>
<keyword id="KW-0689">Ribosomal protein</keyword>
<feature type="chain" id="PRO_0000174002" description="Small ribosomal subunit protein eS30">
    <location>
        <begin position="1"/>
        <end position="59"/>
    </location>
</feature>
<feature type="region of interest" description="Disordered" evidence="2">
    <location>
        <begin position="1"/>
        <end position="35"/>
    </location>
</feature>
<feature type="compositionally biased region" description="Basic residues" evidence="2">
    <location>
        <begin position="23"/>
        <end position="35"/>
    </location>
</feature>
<feature type="modified residue" description="N6-succinyllysine" evidence="1">
    <location>
        <position position="51"/>
    </location>
</feature>
<sequence>KVHGSLARAGKVRGQTPKVAKQEKKKKKTGRAKRRMQYNRRFVNVVPTFGKKKGPNANS</sequence>